<keyword id="KW-0067">ATP-binding</keyword>
<keyword id="KW-0997">Cell inner membrane</keyword>
<keyword id="KW-1003">Cell membrane</keyword>
<keyword id="KW-0445">Lipid transport</keyword>
<keyword id="KW-0472">Membrane</keyword>
<keyword id="KW-0547">Nucleotide-binding</keyword>
<keyword id="KW-1185">Reference proteome</keyword>
<keyword id="KW-1278">Translocase</keyword>
<keyword id="KW-0812">Transmembrane</keyword>
<keyword id="KW-1133">Transmembrane helix</keyword>
<keyword id="KW-0813">Transport</keyword>
<feature type="chain" id="PRO_0000271614" description="ATP-dependent lipid A-core flippase">
    <location>
        <begin position="1"/>
        <end position="584"/>
    </location>
</feature>
<feature type="transmembrane region" description="Helical" evidence="1">
    <location>
        <begin position="18"/>
        <end position="38"/>
    </location>
</feature>
<feature type="transmembrane region" description="Helical" evidence="1">
    <location>
        <begin position="65"/>
        <end position="85"/>
    </location>
</feature>
<feature type="transmembrane region" description="Helical" evidence="1">
    <location>
        <begin position="155"/>
        <end position="175"/>
    </location>
</feature>
<feature type="transmembrane region" description="Helical" evidence="1">
    <location>
        <begin position="252"/>
        <end position="272"/>
    </location>
</feature>
<feature type="transmembrane region" description="Helical" evidence="1">
    <location>
        <begin position="277"/>
        <end position="297"/>
    </location>
</feature>
<feature type="domain" description="ABC transmembrane type-1" evidence="1">
    <location>
        <begin position="30"/>
        <end position="312"/>
    </location>
</feature>
<feature type="domain" description="ABC transporter" evidence="1">
    <location>
        <begin position="344"/>
        <end position="580"/>
    </location>
</feature>
<feature type="binding site" evidence="1">
    <location>
        <begin position="378"/>
        <end position="385"/>
    </location>
    <ligand>
        <name>ATP</name>
        <dbReference type="ChEBI" id="CHEBI:30616"/>
    </ligand>
</feature>
<proteinExistence type="inferred from homology"/>
<dbReference type="EC" id="7.5.2.6" evidence="1"/>
<dbReference type="EMBL" id="CP000016">
    <property type="protein sequence ID" value="AAZ41014.1"/>
    <property type="molecule type" value="Genomic_DNA"/>
</dbReference>
<dbReference type="RefSeq" id="WP_011282923.1">
    <property type="nucleotide sequence ID" value="NC_007292.1"/>
</dbReference>
<dbReference type="SMR" id="Q492S9"/>
<dbReference type="STRING" id="291272.BPEN_390"/>
<dbReference type="KEGG" id="bpn:BPEN_390"/>
<dbReference type="eggNOG" id="COG1132">
    <property type="taxonomic scope" value="Bacteria"/>
</dbReference>
<dbReference type="HOGENOM" id="CLU_000604_84_7_6"/>
<dbReference type="OrthoDB" id="9806127at2"/>
<dbReference type="Proteomes" id="UP000007794">
    <property type="component" value="Chromosome"/>
</dbReference>
<dbReference type="GO" id="GO:0005886">
    <property type="term" value="C:plasma membrane"/>
    <property type="evidence" value="ECO:0007669"/>
    <property type="project" value="UniProtKB-SubCell"/>
</dbReference>
<dbReference type="GO" id="GO:0015421">
    <property type="term" value="F:ABC-type oligopeptide transporter activity"/>
    <property type="evidence" value="ECO:0007669"/>
    <property type="project" value="TreeGrafter"/>
</dbReference>
<dbReference type="GO" id="GO:0005524">
    <property type="term" value="F:ATP binding"/>
    <property type="evidence" value="ECO:0007669"/>
    <property type="project" value="UniProtKB-KW"/>
</dbReference>
<dbReference type="GO" id="GO:0016887">
    <property type="term" value="F:ATP hydrolysis activity"/>
    <property type="evidence" value="ECO:0007669"/>
    <property type="project" value="InterPro"/>
</dbReference>
<dbReference type="GO" id="GO:0034040">
    <property type="term" value="F:ATPase-coupled lipid transmembrane transporter activity"/>
    <property type="evidence" value="ECO:0007669"/>
    <property type="project" value="InterPro"/>
</dbReference>
<dbReference type="CDD" id="cd18552">
    <property type="entry name" value="ABC_6TM_MsbA_like"/>
    <property type="match status" value="1"/>
</dbReference>
<dbReference type="FunFam" id="3.40.50.300:FF:000140">
    <property type="entry name" value="Lipid A export ATP-binding/permease protein MsbA"/>
    <property type="match status" value="1"/>
</dbReference>
<dbReference type="Gene3D" id="1.20.1560.10">
    <property type="entry name" value="ABC transporter type 1, transmembrane domain"/>
    <property type="match status" value="1"/>
</dbReference>
<dbReference type="Gene3D" id="3.40.50.300">
    <property type="entry name" value="P-loop containing nucleotide triphosphate hydrolases"/>
    <property type="match status" value="1"/>
</dbReference>
<dbReference type="InterPro" id="IPR003593">
    <property type="entry name" value="AAA+_ATPase"/>
</dbReference>
<dbReference type="InterPro" id="IPR011527">
    <property type="entry name" value="ABC1_TM_dom"/>
</dbReference>
<dbReference type="InterPro" id="IPR036640">
    <property type="entry name" value="ABC1_TM_sf"/>
</dbReference>
<dbReference type="InterPro" id="IPR003439">
    <property type="entry name" value="ABC_transporter-like_ATP-bd"/>
</dbReference>
<dbReference type="InterPro" id="IPR017871">
    <property type="entry name" value="ABC_transporter-like_CS"/>
</dbReference>
<dbReference type="InterPro" id="IPR011917">
    <property type="entry name" value="ABC_transpr_lipidA"/>
</dbReference>
<dbReference type="InterPro" id="IPR027417">
    <property type="entry name" value="P-loop_NTPase"/>
</dbReference>
<dbReference type="InterPro" id="IPR039421">
    <property type="entry name" value="Type_1_exporter"/>
</dbReference>
<dbReference type="NCBIfam" id="TIGR02203">
    <property type="entry name" value="MsbA_lipidA"/>
    <property type="match status" value="1"/>
</dbReference>
<dbReference type="NCBIfam" id="NF008381">
    <property type="entry name" value="PRK11176.1"/>
    <property type="match status" value="1"/>
</dbReference>
<dbReference type="PANTHER" id="PTHR43394:SF1">
    <property type="entry name" value="ATP-BINDING CASSETTE SUB-FAMILY B MEMBER 10, MITOCHONDRIAL"/>
    <property type="match status" value="1"/>
</dbReference>
<dbReference type="PANTHER" id="PTHR43394">
    <property type="entry name" value="ATP-DEPENDENT PERMEASE MDL1, MITOCHONDRIAL"/>
    <property type="match status" value="1"/>
</dbReference>
<dbReference type="Pfam" id="PF00664">
    <property type="entry name" value="ABC_membrane"/>
    <property type="match status" value="1"/>
</dbReference>
<dbReference type="Pfam" id="PF00005">
    <property type="entry name" value="ABC_tran"/>
    <property type="match status" value="1"/>
</dbReference>
<dbReference type="SMART" id="SM00382">
    <property type="entry name" value="AAA"/>
    <property type="match status" value="1"/>
</dbReference>
<dbReference type="SUPFAM" id="SSF90123">
    <property type="entry name" value="ABC transporter transmembrane region"/>
    <property type="match status" value="1"/>
</dbReference>
<dbReference type="SUPFAM" id="SSF52540">
    <property type="entry name" value="P-loop containing nucleoside triphosphate hydrolases"/>
    <property type="match status" value="1"/>
</dbReference>
<dbReference type="PROSITE" id="PS50929">
    <property type="entry name" value="ABC_TM1F"/>
    <property type="match status" value="1"/>
</dbReference>
<dbReference type="PROSITE" id="PS00211">
    <property type="entry name" value="ABC_TRANSPORTER_1"/>
    <property type="match status" value="1"/>
</dbReference>
<dbReference type="PROSITE" id="PS50893">
    <property type="entry name" value="ABC_TRANSPORTER_2"/>
    <property type="match status" value="1"/>
</dbReference>
<dbReference type="PROSITE" id="PS51239">
    <property type="entry name" value="MSBA"/>
    <property type="match status" value="1"/>
</dbReference>
<comment type="function">
    <text evidence="1">Involved in lipopolysaccharide (LPS) biosynthesis. Translocates lipid A-core from the inner to the outer leaflet of the inner membrane. Transmembrane domains (TMD) form a pore in the inner membrane and the ATP-binding domain (NBD) is responsible for energy generation.</text>
</comment>
<comment type="catalytic activity">
    <reaction evidence="1">
        <text>ATP + H2O + lipid A-core oligosaccharideSide 1 = ADP + phosphate + lipid A-core oligosaccharideSide 2.</text>
        <dbReference type="EC" id="7.5.2.6"/>
    </reaction>
</comment>
<comment type="subunit">
    <text evidence="1">Homodimer.</text>
</comment>
<comment type="subcellular location">
    <subcellularLocation>
        <location evidence="1">Cell inner membrane</location>
        <topology evidence="1">Multi-pass membrane protein</topology>
    </subcellularLocation>
</comment>
<comment type="domain">
    <text evidence="1">In MsbA the ATP-binding domain (NBD) and the transmembrane domain (TMD) are fused.</text>
</comment>
<comment type="similarity">
    <text evidence="1">Belongs to the ABC transporter superfamily. Lipid exporter (TC 3.A.1.106) family.</text>
</comment>
<gene>
    <name evidence="1" type="primary">msbA</name>
    <name type="ordered locus">BPEN_390</name>
</gene>
<sequence length="584" mass="65249">MLQYNKNHSSTWQTFRRLWPIIFPFRVGLVVASITLILNATSDALMLALLKPLLDDGFGKANRDVFVWMPLALVGLMGIRGFSGFASTYCISWVSGKVVMQMRRALFKHIMNMPVSFFVKQSTGTLVSRITYDSDQVASSSSGALVTVIREGASIIGLCIMMFYYSWQLSLILVLIAPIVSITIKLVSHRFRTISKKMQSAMGQLTSSAEQMLQGHKEVLIFGGQHTEKDRFNCVSNRMRQQSMKMVQTSSIFDPLIQCVASLALAFVLYAASIPSVMEMLTAGTITVIFSSMIVLMKPLKSLTNVSAQFQRGMAACQTLFSILDLETEKDQGILDITRVQGHIIFDDVTFFYPEKNTPSLYKINFSIESGKTVALVGRSGSGKSTIVNLLTRFYDIDKGRILLDGFNLNDYKLASLRNQIAMVSQNVHLFNDTIANNIAYARRNFYSRESIETAARMACAMDFISQMKNGLDTIIGENGILLSSGQRQRIAIARALLRDCPILIFDEATSALDSASEHIIHKSLDTLKKNRTSLIIAHRLSTVENADEILVIENGYIMERGVHKVLIRRQGIYAQLYKLQFSS</sequence>
<accession>Q492S9</accession>
<reference key="1">
    <citation type="journal article" date="2005" name="Genome Res.">
        <title>Genome sequence of Blochmannia pennsylvanicus indicates parallel evolutionary trends among bacterial mutualists of insects.</title>
        <authorList>
            <person name="Degnan P.H."/>
            <person name="Lazarus A.B."/>
            <person name="Wernegreen J.J."/>
        </authorList>
    </citation>
    <scope>NUCLEOTIDE SEQUENCE [LARGE SCALE GENOMIC DNA]</scope>
    <source>
        <strain>BPEN</strain>
    </source>
</reference>
<name>MSBA_BLOPB</name>
<organism>
    <name type="scientific">Blochmanniella pennsylvanica (strain BPEN)</name>
    <dbReference type="NCBI Taxonomy" id="291272"/>
    <lineage>
        <taxon>Bacteria</taxon>
        <taxon>Pseudomonadati</taxon>
        <taxon>Pseudomonadota</taxon>
        <taxon>Gammaproteobacteria</taxon>
        <taxon>Enterobacterales</taxon>
        <taxon>Enterobacteriaceae</taxon>
        <taxon>ant endosymbionts</taxon>
        <taxon>Candidatus Blochmanniella</taxon>
    </lineage>
</organism>
<protein>
    <recommendedName>
        <fullName evidence="1">ATP-dependent lipid A-core flippase</fullName>
        <ecNumber evidence="1">7.5.2.6</ecNumber>
    </recommendedName>
    <alternativeName>
        <fullName evidence="1">Lipid A export ATP-binding/permease protein MsbA</fullName>
    </alternativeName>
</protein>
<evidence type="ECO:0000255" key="1">
    <source>
        <dbReference type="HAMAP-Rule" id="MF_01703"/>
    </source>
</evidence>